<keyword id="KW-0050">Antiport</keyword>
<keyword id="KW-0997">Cell inner membrane</keyword>
<keyword id="KW-1003">Cell membrane</keyword>
<keyword id="KW-0406">Ion transport</keyword>
<keyword id="KW-0472">Membrane</keyword>
<keyword id="KW-0630">Potassium</keyword>
<keyword id="KW-0633">Potassium transport</keyword>
<keyword id="KW-0812">Transmembrane</keyword>
<keyword id="KW-1133">Transmembrane helix</keyword>
<keyword id="KW-0813">Transport</keyword>
<evidence type="ECO:0000255" key="1">
    <source>
        <dbReference type="HAMAP-Rule" id="MF_01075"/>
    </source>
</evidence>
<organism>
    <name type="scientific">Salmonella newport (strain SL254)</name>
    <dbReference type="NCBI Taxonomy" id="423368"/>
    <lineage>
        <taxon>Bacteria</taxon>
        <taxon>Pseudomonadati</taxon>
        <taxon>Pseudomonadota</taxon>
        <taxon>Gammaproteobacteria</taxon>
        <taxon>Enterobacterales</taxon>
        <taxon>Enterobacteriaceae</taxon>
        <taxon>Salmonella</taxon>
    </lineage>
</organism>
<feature type="chain" id="PRO_1000136714" description="K(+)/H(+) antiporter NhaP2">
    <location>
        <begin position="1"/>
        <end position="577"/>
    </location>
</feature>
<feature type="transmembrane region" description="Helical" evidence="1">
    <location>
        <begin position="3"/>
        <end position="23"/>
    </location>
</feature>
<feature type="transmembrane region" description="Helical" evidence="1">
    <location>
        <begin position="30"/>
        <end position="50"/>
    </location>
</feature>
<feature type="transmembrane region" description="Helical" evidence="1">
    <location>
        <begin position="58"/>
        <end position="78"/>
    </location>
</feature>
<feature type="transmembrane region" description="Helical" evidence="1">
    <location>
        <begin position="87"/>
        <end position="107"/>
    </location>
</feature>
<feature type="transmembrane region" description="Helical" evidence="1">
    <location>
        <begin position="109"/>
        <end position="129"/>
    </location>
</feature>
<feature type="transmembrane region" description="Helical" evidence="1">
    <location>
        <begin position="185"/>
        <end position="205"/>
    </location>
</feature>
<feature type="transmembrane region" description="Helical" evidence="1">
    <location>
        <begin position="221"/>
        <end position="241"/>
    </location>
</feature>
<feature type="transmembrane region" description="Helical" evidence="1">
    <location>
        <begin position="271"/>
        <end position="291"/>
    </location>
</feature>
<feature type="transmembrane region" description="Helical" evidence="1">
    <location>
        <begin position="293"/>
        <end position="313"/>
    </location>
</feature>
<feature type="transmembrane region" description="Helical" evidence="1">
    <location>
        <begin position="334"/>
        <end position="354"/>
    </location>
</feature>
<feature type="transmembrane region" description="Helical" evidence="1">
    <location>
        <begin position="363"/>
        <end position="383"/>
    </location>
</feature>
<feature type="domain" description="RCK C-terminal" evidence="1">
    <location>
        <begin position="403"/>
        <end position="485"/>
    </location>
</feature>
<sequence length="577" mass="62469">MDAATIISLFILGSILVTSSILLSSFSSRLGIPILVIFLAIGMLAGVDGIGGIPFDNYPFAYMVSNLALAIILLDGGMRTQASSFRVALGPALSLATLGVLITSGLTGMMAAWLFHLDLIEGLLIGAIVGSTDAAAVFSLLGGKGLNERVGSTLEIESGSNDPMAVFLTITLIEMIQKHETGLDWMFAVHIIQQFGLGIVFGLGGGYLLQQMINRISLPSGLYPMLALSGGILIFALTTALEGSGILAVYLCGFLLGNRPIRNRYGILQNFDGLAWLAQIAMFLVLGLLVTPSDLWPIAVPALILSIWMIFFARPLSVFTGLLPFRGFNLRERIFISWVGLRGAVPIILAVFPMMAGLENARLFFNVAFFVVLVSLLLQGTSLSWAAKRAKVVVPPVGWPVSRVGLDIHPDNPWEQFIYQLSADKWCVGAALRDLHMPNETRIAALFRNNELFHPTGSTRLQEGDVLCVIGRERDLPALGKLFSQSPPVSLDQRFFGDFILEANAKFADVALIYGLEEGTEYRDKQQTLGEIIQQLLGAAPVVGDQVEFGGMIWTVAEKEDNVVRKIGVRVAEDEAE</sequence>
<dbReference type="EMBL" id="CP001113">
    <property type="protein sequence ID" value="ACF61932.1"/>
    <property type="molecule type" value="Genomic_DNA"/>
</dbReference>
<dbReference type="RefSeq" id="WP_000338376.1">
    <property type="nucleotide sequence ID" value="NZ_CCMR01000003.1"/>
</dbReference>
<dbReference type="SMR" id="B4SUJ3"/>
<dbReference type="KEGG" id="see:SNSL254_A1939"/>
<dbReference type="HOGENOM" id="CLU_005912_9_2_6"/>
<dbReference type="Proteomes" id="UP000008824">
    <property type="component" value="Chromosome"/>
</dbReference>
<dbReference type="GO" id="GO:0005886">
    <property type="term" value="C:plasma membrane"/>
    <property type="evidence" value="ECO:0007669"/>
    <property type="project" value="UniProtKB-SubCell"/>
</dbReference>
<dbReference type="GO" id="GO:0050660">
    <property type="term" value="F:flavin adenine dinucleotide binding"/>
    <property type="evidence" value="ECO:0007669"/>
    <property type="project" value="InterPro"/>
</dbReference>
<dbReference type="GO" id="GO:0015386">
    <property type="term" value="F:potassium:proton antiporter activity"/>
    <property type="evidence" value="ECO:0007669"/>
    <property type="project" value="UniProtKB-UniRule"/>
</dbReference>
<dbReference type="GO" id="GO:0006884">
    <property type="term" value="P:cell volume homeostasis"/>
    <property type="evidence" value="ECO:0007669"/>
    <property type="project" value="InterPro"/>
</dbReference>
<dbReference type="FunFam" id="1.20.1530.20:FF:000002">
    <property type="entry name" value="K(+)/H(+) antiporter NhaP2"/>
    <property type="match status" value="1"/>
</dbReference>
<dbReference type="Gene3D" id="1.20.1530.20">
    <property type="match status" value="1"/>
</dbReference>
<dbReference type="Gene3D" id="3.30.465.10">
    <property type="match status" value="1"/>
</dbReference>
<dbReference type="Gene3D" id="3.30.70.1450">
    <property type="entry name" value="Regulator of K+ conductance, C-terminal domain"/>
    <property type="match status" value="1"/>
</dbReference>
<dbReference type="HAMAP" id="MF_01075">
    <property type="entry name" value="NhaP2"/>
    <property type="match status" value="1"/>
</dbReference>
<dbReference type="InterPro" id="IPR006153">
    <property type="entry name" value="Cation/H_exchanger_TM"/>
</dbReference>
<dbReference type="InterPro" id="IPR036318">
    <property type="entry name" value="FAD-bd_PCMH-like_sf"/>
</dbReference>
<dbReference type="InterPro" id="IPR016169">
    <property type="entry name" value="FAD-bd_PCMH_sub2"/>
</dbReference>
<dbReference type="InterPro" id="IPR038770">
    <property type="entry name" value="Na+/solute_symporter_sf"/>
</dbReference>
<dbReference type="InterPro" id="IPR023729">
    <property type="entry name" value="NhaP2"/>
</dbReference>
<dbReference type="InterPro" id="IPR006037">
    <property type="entry name" value="RCK_C"/>
</dbReference>
<dbReference type="InterPro" id="IPR036721">
    <property type="entry name" value="RCK_C_sf"/>
</dbReference>
<dbReference type="InterPro" id="IPR005170">
    <property type="entry name" value="Transptr-assoc_dom"/>
</dbReference>
<dbReference type="NCBIfam" id="NF003714">
    <property type="entry name" value="PRK05326.1-1"/>
    <property type="match status" value="1"/>
</dbReference>
<dbReference type="NCBIfam" id="NF003715">
    <property type="entry name" value="PRK05326.1-2"/>
    <property type="match status" value="1"/>
</dbReference>
<dbReference type="NCBIfam" id="NF003716">
    <property type="entry name" value="PRK05326.1-3"/>
    <property type="match status" value="1"/>
</dbReference>
<dbReference type="PANTHER" id="PTHR32507:SF7">
    <property type="entry name" value="K(+)_H(+) ANTIPORTER NHAP2"/>
    <property type="match status" value="1"/>
</dbReference>
<dbReference type="PANTHER" id="PTHR32507">
    <property type="entry name" value="NA(+)/H(+) ANTIPORTER 1"/>
    <property type="match status" value="1"/>
</dbReference>
<dbReference type="Pfam" id="PF03471">
    <property type="entry name" value="CorC_HlyC"/>
    <property type="match status" value="1"/>
</dbReference>
<dbReference type="Pfam" id="PF00999">
    <property type="entry name" value="Na_H_Exchanger"/>
    <property type="match status" value="1"/>
</dbReference>
<dbReference type="Pfam" id="PF02080">
    <property type="entry name" value="TrkA_C"/>
    <property type="match status" value="1"/>
</dbReference>
<dbReference type="SMART" id="SM01091">
    <property type="entry name" value="CorC_HlyC"/>
    <property type="match status" value="1"/>
</dbReference>
<dbReference type="SUPFAM" id="SSF56176">
    <property type="entry name" value="FAD-binding/transporter-associated domain-like"/>
    <property type="match status" value="1"/>
</dbReference>
<dbReference type="SUPFAM" id="SSF116726">
    <property type="entry name" value="TrkA C-terminal domain-like"/>
    <property type="match status" value="1"/>
</dbReference>
<dbReference type="PROSITE" id="PS51202">
    <property type="entry name" value="RCK_C"/>
    <property type="match status" value="1"/>
</dbReference>
<comment type="function">
    <text evidence="1">K(+)/H(+) antiporter that extrudes potassium in exchange for external protons and maintains the internal concentration of potassium under toxic levels.</text>
</comment>
<comment type="catalytic activity">
    <reaction evidence="1">
        <text>K(+)(in) + H(+)(out) = K(+)(out) + H(+)(in)</text>
        <dbReference type="Rhea" id="RHEA:29467"/>
        <dbReference type="ChEBI" id="CHEBI:15378"/>
        <dbReference type="ChEBI" id="CHEBI:29103"/>
    </reaction>
    <physiologicalReaction direction="left-to-right" evidence="1">
        <dbReference type="Rhea" id="RHEA:29468"/>
    </physiologicalReaction>
</comment>
<comment type="subcellular location">
    <subcellularLocation>
        <location evidence="1">Cell inner membrane</location>
        <topology evidence="1">Multi-pass membrane protein</topology>
    </subcellularLocation>
</comment>
<comment type="similarity">
    <text evidence="1">Belongs to the monovalent cation:proton antiporter 1 (CPA1) transporter (TC 2.A.36) family. NhaP2 subfamily.</text>
</comment>
<accession>B4SUJ3</accession>
<gene>
    <name evidence="1" type="primary">nhaP2</name>
    <name type="synonym">cvrA</name>
    <name type="ordered locus">SNSL254_A1939</name>
</gene>
<proteinExistence type="inferred from homology"/>
<protein>
    <recommendedName>
        <fullName evidence="1">K(+)/H(+) antiporter NhaP2</fullName>
    </recommendedName>
    <alternativeName>
        <fullName evidence="1">Potassium/proton antiporter NhaP2</fullName>
    </alternativeName>
</protein>
<name>NHAP2_SALNS</name>
<reference key="1">
    <citation type="journal article" date="2011" name="J. Bacteriol.">
        <title>Comparative genomics of 28 Salmonella enterica isolates: evidence for CRISPR-mediated adaptive sublineage evolution.</title>
        <authorList>
            <person name="Fricke W.F."/>
            <person name="Mammel M.K."/>
            <person name="McDermott P.F."/>
            <person name="Tartera C."/>
            <person name="White D.G."/>
            <person name="Leclerc J.E."/>
            <person name="Ravel J."/>
            <person name="Cebula T.A."/>
        </authorList>
    </citation>
    <scope>NUCLEOTIDE SEQUENCE [LARGE SCALE GENOMIC DNA]</scope>
    <source>
        <strain>SL254</strain>
    </source>
</reference>